<proteinExistence type="inferred from homology"/>
<comment type="function">
    <text evidence="1">One of the proteins required for the normal export of preproteins out of the cell cytoplasm. It is a molecular chaperone that binds to a subset of precursor proteins, maintaining them in a translocation-competent state. It also specifically binds to its receptor SecA.</text>
</comment>
<comment type="subunit">
    <text evidence="1">Homotetramer, a dimer of dimers. One homotetramer interacts with 1 SecA dimer.</text>
</comment>
<comment type="subcellular location">
    <subcellularLocation>
        <location evidence="1">Cytoplasm</location>
    </subcellularLocation>
</comment>
<comment type="similarity">
    <text evidence="1">Belongs to the SecB family.</text>
</comment>
<organism>
    <name type="scientific">Paraburkholderia phymatum (strain DSM 17167 / CIP 108236 / LMG 21445 / STM815)</name>
    <name type="common">Burkholderia phymatum</name>
    <dbReference type="NCBI Taxonomy" id="391038"/>
    <lineage>
        <taxon>Bacteria</taxon>
        <taxon>Pseudomonadati</taxon>
        <taxon>Pseudomonadota</taxon>
        <taxon>Betaproteobacteria</taxon>
        <taxon>Burkholderiales</taxon>
        <taxon>Burkholderiaceae</taxon>
        <taxon>Paraburkholderia</taxon>
    </lineage>
</organism>
<sequence length="156" mass="17240">MSDENNQPFFNIQRIYLKDMSLEQPNSPAIFLEQEMPSVEVEVDVKAERLADTVFEILVTGTVTAKVSDKVAFLIEAKQAGIFDIRNIPAEQIDPLVGIACPTILFPYLRSNIADAITRAGFPPIHLAEINFQALYEQRLAQIATQETGAGSAAHH</sequence>
<evidence type="ECO:0000255" key="1">
    <source>
        <dbReference type="HAMAP-Rule" id="MF_00821"/>
    </source>
</evidence>
<feature type="chain" id="PRO_1000134369" description="Protein-export protein SecB">
    <location>
        <begin position="1"/>
        <end position="156"/>
    </location>
</feature>
<name>SECB_PARP8</name>
<reference key="1">
    <citation type="journal article" date="2014" name="Stand. Genomic Sci.">
        <title>Complete genome sequence of Burkholderia phymatum STM815(T), a broad host range and efficient nitrogen-fixing symbiont of Mimosa species.</title>
        <authorList>
            <person name="Moulin L."/>
            <person name="Klonowska A."/>
            <person name="Caroline B."/>
            <person name="Booth K."/>
            <person name="Vriezen J.A."/>
            <person name="Melkonian R."/>
            <person name="James E.K."/>
            <person name="Young J.P."/>
            <person name="Bena G."/>
            <person name="Hauser L."/>
            <person name="Land M."/>
            <person name="Kyrpides N."/>
            <person name="Bruce D."/>
            <person name="Chain P."/>
            <person name="Copeland A."/>
            <person name="Pitluck S."/>
            <person name="Woyke T."/>
            <person name="Lizotte-Waniewski M."/>
            <person name="Bristow J."/>
            <person name="Riley M."/>
        </authorList>
    </citation>
    <scope>NUCLEOTIDE SEQUENCE [LARGE SCALE GENOMIC DNA]</scope>
    <source>
        <strain>DSM 17167 / CIP 108236 / LMG 21445 / STM815</strain>
    </source>
</reference>
<keyword id="KW-0143">Chaperone</keyword>
<keyword id="KW-0963">Cytoplasm</keyword>
<keyword id="KW-0653">Protein transport</keyword>
<keyword id="KW-1185">Reference proteome</keyword>
<keyword id="KW-0811">Translocation</keyword>
<keyword id="KW-0813">Transport</keyword>
<dbReference type="EMBL" id="CP001043">
    <property type="protein sequence ID" value="ACC69462.1"/>
    <property type="molecule type" value="Genomic_DNA"/>
</dbReference>
<dbReference type="RefSeq" id="WP_007577679.1">
    <property type="nucleotide sequence ID" value="NZ_CADFGH010000001.1"/>
</dbReference>
<dbReference type="SMR" id="B2JC98"/>
<dbReference type="STRING" id="391038.Bphy_0269"/>
<dbReference type="GeneID" id="55527018"/>
<dbReference type="KEGG" id="bph:Bphy_0269"/>
<dbReference type="eggNOG" id="COG1952">
    <property type="taxonomic scope" value="Bacteria"/>
</dbReference>
<dbReference type="HOGENOM" id="CLU_111574_1_0_4"/>
<dbReference type="OrthoDB" id="9795145at2"/>
<dbReference type="Proteomes" id="UP000001192">
    <property type="component" value="Chromosome 1"/>
</dbReference>
<dbReference type="GO" id="GO:0005737">
    <property type="term" value="C:cytoplasm"/>
    <property type="evidence" value="ECO:0007669"/>
    <property type="project" value="UniProtKB-SubCell"/>
</dbReference>
<dbReference type="GO" id="GO:0051082">
    <property type="term" value="F:unfolded protein binding"/>
    <property type="evidence" value="ECO:0007669"/>
    <property type="project" value="InterPro"/>
</dbReference>
<dbReference type="GO" id="GO:0006457">
    <property type="term" value="P:protein folding"/>
    <property type="evidence" value="ECO:0007669"/>
    <property type="project" value="UniProtKB-UniRule"/>
</dbReference>
<dbReference type="GO" id="GO:0051262">
    <property type="term" value="P:protein tetramerization"/>
    <property type="evidence" value="ECO:0007669"/>
    <property type="project" value="InterPro"/>
</dbReference>
<dbReference type="GO" id="GO:0015031">
    <property type="term" value="P:protein transport"/>
    <property type="evidence" value="ECO:0007669"/>
    <property type="project" value="UniProtKB-UniRule"/>
</dbReference>
<dbReference type="Gene3D" id="3.10.420.10">
    <property type="entry name" value="SecB-like"/>
    <property type="match status" value="1"/>
</dbReference>
<dbReference type="HAMAP" id="MF_00821">
    <property type="entry name" value="SecB"/>
    <property type="match status" value="1"/>
</dbReference>
<dbReference type="InterPro" id="IPR003708">
    <property type="entry name" value="SecB"/>
</dbReference>
<dbReference type="InterPro" id="IPR035958">
    <property type="entry name" value="SecB-like_sf"/>
</dbReference>
<dbReference type="NCBIfam" id="NF004392">
    <property type="entry name" value="PRK05751.1-3"/>
    <property type="match status" value="1"/>
</dbReference>
<dbReference type="NCBIfam" id="NF004394">
    <property type="entry name" value="PRK05751.1-5"/>
    <property type="match status" value="1"/>
</dbReference>
<dbReference type="NCBIfam" id="TIGR00809">
    <property type="entry name" value="secB"/>
    <property type="match status" value="1"/>
</dbReference>
<dbReference type="PANTHER" id="PTHR36918">
    <property type="match status" value="1"/>
</dbReference>
<dbReference type="PANTHER" id="PTHR36918:SF1">
    <property type="entry name" value="PROTEIN-EXPORT PROTEIN SECB"/>
    <property type="match status" value="1"/>
</dbReference>
<dbReference type="Pfam" id="PF02556">
    <property type="entry name" value="SecB"/>
    <property type="match status" value="1"/>
</dbReference>
<dbReference type="PRINTS" id="PR01594">
    <property type="entry name" value="SECBCHAPRONE"/>
</dbReference>
<dbReference type="SUPFAM" id="SSF54611">
    <property type="entry name" value="SecB-like"/>
    <property type="match status" value="1"/>
</dbReference>
<gene>
    <name evidence="1" type="primary">secB</name>
    <name type="ordered locus">Bphy_0269</name>
</gene>
<protein>
    <recommendedName>
        <fullName evidence="1">Protein-export protein SecB</fullName>
    </recommendedName>
</protein>
<accession>B2JC98</accession>